<name>RICKA_RICBR</name>
<keyword id="KW-0009">Actin-binding</keyword>
<protein>
    <recommendedName>
        <fullName>Arp2/3 complex-activating protein rickA</fullName>
    </recommendedName>
    <alternativeName>
        <fullName>Actin polymerization protein rickA</fullName>
    </alternativeName>
</protein>
<comment type="function">
    <text evidence="1">Recruits and activates the Arp2/3 complex, which in turn leads to actin polymerization, promoting Rickettsia motility during infection.</text>
</comment>
<comment type="subunit">
    <text evidence="1">Homodimer.</text>
</comment>
<comment type="subcellular location">
    <subcellularLocation>
        <location evidence="1">Cell surface</location>
    </subcellularLocation>
</comment>
<organism>
    <name type="scientific">Rickettsia bellii (strain RML369-C)</name>
    <dbReference type="NCBI Taxonomy" id="336407"/>
    <lineage>
        <taxon>Bacteria</taxon>
        <taxon>Pseudomonadati</taxon>
        <taxon>Pseudomonadota</taxon>
        <taxon>Alphaproteobacteria</taxon>
        <taxon>Rickettsiales</taxon>
        <taxon>Rickettsiaceae</taxon>
        <taxon>Rickettsieae</taxon>
        <taxon>Rickettsia</taxon>
        <taxon>belli group</taxon>
    </lineage>
</organism>
<reference key="1">
    <citation type="journal article" date="2006" name="PLoS Genet.">
        <title>Genome sequence of Rickettsia bellii illuminates the role of amoebae in gene exchanges between intracellular pathogens.</title>
        <authorList>
            <person name="Ogata H."/>
            <person name="La Scola B."/>
            <person name="Audic S."/>
            <person name="Renesto P."/>
            <person name="Blanc G."/>
            <person name="Robert C."/>
            <person name="Fournier P.-E."/>
            <person name="Claverie J.-M."/>
            <person name="Raoult D."/>
        </authorList>
    </citation>
    <scope>NUCLEOTIDE SEQUENCE [LARGE SCALE GENOMIC DNA]</scope>
    <source>
        <strain>RML369-C</strain>
    </source>
</reference>
<evidence type="ECO:0000250" key="1"/>
<evidence type="ECO:0000255" key="2">
    <source>
        <dbReference type="PROSITE-ProRule" id="PRU00406"/>
    </source>
</evidence>
<evidence type="ECO:0000256" key="3">
    <source>
        <dbReference type="SAM" id="MobiDB-lite"/>
    </source>
</evidence>
<gene>
    <name type="primary">rickA</name>
    <name type="ordered locus">RBE_0855</name>
</gene>
<feature type="chain" id="PRO_0000259654" description="Arp2/3 complex-activating protein rickA">
    <location>
        <begin position="1"/>
        <end position="518"/>
    </location>
</feature>
<feature type="domain" description="WH2" evidence="2">
    <location>
        <begin position="424"/>
        <end position="441"/>
    </location>
</feature>
<feature type="region of interest" description="Disordered" evidence="3">
    <location>
        <begin position="310"/>
        <end position="518"/>
    </location>
</feature>
<feature type="compositionally biased region" description="Pro residues" evidence="3">
    <location>
        <begin position="344"/>
        <end position="354"/>
    </location>
</feature>
<feature type="compositionally biased region" description="Pro residues" evidence="3">
    <location>
        <begin position="382"/>
        <end position="401"/>
    </location>
</feature>
<feature type="compositionally biased region" description="Polar residues" evidence="3">
    <location>
        <begin position="418"/>
        <end position="430"/>
    </location>
</feature>
<feature type="compositionally biased region" description="Basic and acidic residues" evidence="3">
    <location>
        <begin position="439"/>
        <end position="461"/>
    </location>
</feature>
<feature type="compositionally biased region" description="Polar residues" evidence="3">
    <location>
        <begin position="488"/>
        <end position="498"/>
    </location>
</feature>
<dbReference type="EMBL" id="CP000087">
    <property type="protein sequence ID" value="ABE04936.1"/>
    <property type="molecule type" value="Genomic_DNA"/>
</dbReference>
<dbReference type="RefSeq" id="WP_011477521.1">
    <property type="nucleotide sequence ID" value="NC_007940.1"/>
</dbReference>
<dbReference type="SMR" id="Q1RI78"/>
<dbReference type="KEGG" id="rbe:RBE_0855"/>
<dbReference type="eggNOG" id="COG1196">
    <property type="taxonomic scope" value="Bacteria"/>
</dbReference>
<dbReference type="HOGENOM" id="CLU_567284_0_0_5"/>
<dbReference type="OrthoDB" id="7161168at2"/>
<dbReference type="Proteomes" id="UP000001951">
    <property type="component" value="Chromosome"/>
</dbReference>
<dbReference type="GO" id="GO:0009986">
    <property type="term" value="C:cell surface"/>
    <property type="evidence" value="ECO:0007669"/>
    <property type="project" value="UniProtKB-SubCell"/>
</dbReference>
<dbReference type="GO" id="GO:0003779">
    <property type="term" value="F:actin binding"/>
    <property type="evidence" value="ECO:0007669"/>
    <property type="project" value="UniProtKB-KW"/>
</dbReference>
<dbReference type="InterPro" id="IPR003124">
    <property type="entry name" value="WH2_dom"/>
</dbReference>
<dbReference type="PROSITE" id="PS51082">
    <property type="entry name" value="WH2"/>
    <property type="match status" value="1"/>
</dbReference>
<proteinExistence type="inferred from homology"/>
<sequence>MAKITELDHHLNQEKEALDKVVSNLNELCEHNQKLQGFIEIQKEVKELKKEHIKSLSWFKKLINTVSNIKYVFVKSEEQLAKDAIEQNNKLLKRIDNTILSVADKSGPLKQELQKELRKNFENLAKKDLSKDQRERLSNLLNNEYAANPQKFAQLPMSKPLHFPNAEELENQHNDLKVIQQNVLNLLTENSNIEELKKIQKQVAEIREEVPFTKLEKLNNFWQKIKNIFVNNSEQVLAKNKENNTKTIINIEEKLHKANNKFFELVSNKKQDIENIISNLPDSKRLEAIKEKLQKHINVKDTNNIAEQASAAQLQSAETKPTAVVLPNNAIPTTPPVTEEKTFTPPPAPPPPMPTDNIPTPLPVSKAEATEHKNVETAASNVPPPPPPPMPTGNVPPPPPVGDNTVTSTPQKAKETNQPRPAVDTTNLMKQIQGGFNLKKIEYGEDGKPIPKNKEDTKETSDPIIAALNKIRSAKVSSDSERSNSDSGTDSGWASDVSTRSKKVLTRRERNAKQSQQR</sequence>
<accession>Q1RI78</accession>